<organism>
    <name type="scientific">Rhodopseudomonas palustris (strain BisB18)</name>
    <dbReference type="NCBI Taxonomy" id="316056"/>
    <lineage>
        <taxon>Bacteria</taxon>
        <taxon>Pseudomonadati</taxon>
        <taxon>Pseudomonadota</taxon>
        <taxon>Alphaproteobacteria</taxon>
        <taxon>Hyphomicrobiales</taxon>
        <taxon>Nitrobacteraceae</taxon>
        <taxon>Rhodopseudomonas</taxon>
    </lineage>
</organism>
<evidence type="ECO:0000255" key="1">
    <source>
        <dbReference type="HAMAP-Rule" id="MF_00181"/>
    </source>
</evidence>
<comment type="function">
    <text evidence="1">Presumably involved in the processing and regular turnover of intracellular proteins. Catalyzes the removal of unsubstituted N-terminal amino acids from various peptides.</text>
</comment>
<comment type="catalytic activity">
    <reaction evidence="1">
        <text>Release of an N-terminal amino acid, Xaa-|-Yaa-, in which Xaa is preferably Leu, but may be other amino acids including Pro although not Arg or Lys, and Yaa may be Pro. Amino acid amides and methyl esters are also readily hydrolyzed, but rates on arylamides are exceedingly low.</text>
        <dbReference type="EC" id="3.4.11.1"/>
    </reaction>
</comment>
<comment type="catalytic activity">
    <reaction evidence="1">
        <text>Release of an N-terminal amino acid, preferentially leucine, but not glutamic or aspartic acids.</text>
        <dbReference type="EC" id="3.4.11.10"/>
    </reaction>
</comment>
<comment type="cofactor">
    <cofactor evidence="1">
        <name>Mn(2+)</name>
        <dbReference type="ChEBI" id="CHEBI:29035"/>
    </cofactor>
    <text evidence="1">Binds 2 manganese ions per subunit.</text>
</comment>
<comment type="subcellular location">
    <subcellularLocation>
        <location evidence="1">Cytoplasm</location>
    </subcellularLocation>
</comment>
<comment type="similarity">
    <text evidence="1">Belongs to the peptidase M17 family.</text>
</comment>
<name>AMPA_RHOPB</name>
<accession>Q215R8</accession>
<feature type="chain" id="PRO_1000019969" description="Probable cytosol aminopeptidase">
    <location>
        <begin position="1"/>
        <end position="499"/>
    </location>
</feature>
<feature type="active site" evidence="1">
    <location>
        <position position="276"/>
    </location>
</feature>
<feature type="active site" evidence="1">
    <location>
        <position position="350"/>
    </location>
</feature>
<feature type="binding site" evidence="1">
    <location>
        <position position="264"/>
    </location>
    <ligand>
        <name>Mn(2+)</name>
        <dbReference type="ChEBI" id="CHEBI:29035"/>
        <label>2</label>
    </ligand>
</feature>
<feature type="binding site" evidence="1">
    <location>
        <position position="269"/>
    </location>
    <ligand>
        <name>Mn(2+)</name>
        <dbReference type="ChEBI" id="CHEBI:29035"/>
        <label>1</label>
    </ligand>
</feature>
<feature type="binding site" evidence="1">
    <location>
        <position position="269"/>
    </location>
    <ligand>
        <name>Mn(2+)</name>
        <dbReference type="ChEBI" id="CHEBI:29035"/>
        <label>2</label>
    </ligand>
</feature>
<feature type="binding site" evidence="1">
    <location>
        <position position="287"/>
    </location>
    <ligand>
        <name>Mn(2+)</name>
        <dbReference type="ChEBI" id="CHEBI:29035"/>
        <label>2</label>
    </ligand>
</feature>
<feature type="binding site" evidence="1">
    <location>
        <position position="346"/>
    </location>
    <ligand>
        <name>Mn(2+)</name>
        <dbReference type="ChEBI" id="CHEBI:29035"/>
        <label>1</label>
    </ligand>
</feature>
<feature type="binding site" evidence="1">
    <location>
        <position position="348"/>
    </location>
    <ligand>
        <name>Mn(2+)</name>
        <dbReference type="ChEBI" id="CHEBI:29035"/>
        <label>1</label>
    </ligand>
</feature>
<feature type="binding site" evidence="1">
    <location>
        <position position="348"/>
    </location>
    <ligand>
        <name>Mn(2+)</name>
        <dbReference type="ChEBI" id="CHEBI:29035"/>
        <label>2</label>
    </ligand>
</feature>
<proteinExistence type="inferred from homology"/>
<keyword id="KW-0031">Aminopeptidase</keyword>
<keyword id="KW-0963">Cytoplasm</keyword>
<keyword id="KW-0378">Hydrolase</keyword>
<keyword id="KW-0464">Manganese</keyword>
<keyword id="KW-0479">Metal-binding</keyword>
<keyword id="KW-0645">Protease</keyword>
<reference key="1">
    <citation type="submission" date="2006-03" db="EMBL/GenBank/DDBJ databases">
        <title>Complete sequence of Rhodopseudomonas palustris BisB18.</title>
        <authorList>
            <consortium name="US DOE Joint Genome Institute"/>
            <person name="Copeland A."/>
            <person name="Lucas S."/>
            <person name="Lapidus A."/>
            <person name="Barry K."/>
            <person name="Detter J.C."/>
            <person name="Glavina del Rio T."/>
            <person name="Hammon N."/>
            <person name="Israni S."/>
            <person name="Dalin E."/>
            <person name="Tice H."/>
            <person name="Pitluck S."/>
            <person name="Chain P."/>
            <person name="Malfatti S."/>
            <person name="Shin M."/>
            <person name="Vergez L."/>
            <person name="Schmutz J."/>
            <person name="Larimer F."/>
            <person name="Land M."/>
            <person name="Hauser L."/>
            <person name="Pelletier D.A."/>
            <person name="Kyrpides N."/>
            <person name="Anderson I."/>
            <person name="Oda Y."/>
            <person name="Harwood C.S."/>
            <person name="Richardson P."/>
        </authorList>
    </citation>
    <scope>NUCLEOTIDE SEQUENCE [LARGE SCALE GENOMIC DNA]</scope>
    <source>
        <strain>BisB18</strain>
    </source>
</reference>
<dbReference type="EC" id="3.4.11.1" evidence="1"/>
<dbReference type="EC" id="3.4.11.10" evidence="1"/>
<dbReference type="EMBL" id="CP000301">
    <property type="protein sequence ID" value="ABD87868.1"/>
    <property type="molecule type" value="Genomic_DNA"/>
</dbReference>
<dbReference type="SMR" id="Q215R8"/>
<dbReference type="STRING" id="316056.RPC_2314"/>
<dbReference type="KEGG" id="rpc:RPC_2314"/>
<dbReference type="eggNOG" id="COG0260">
    <property type="taxonomic scope" value="Bacteria"/>
</dbReference>
<dbReference type="HOGENOM" id="CLU_013734_6_0_5"/>
<dbReference type="OrthoDB" id="9809354at2"/>
<dbReference type="GO" id="GO:0005737">
    <property type="term" value="C:cytoplasm"/>
    <property type="evidence" value="ECO:0007669"/>
    <property type="project" value="UniProtKB-SubCell"/>
</dbReference>
<dbReference type="GO" id="GO:0030145">
    <property type="term" value="F:manganese ion binding"/>
    <property type="evidence" value="ECO:0007669"/>
    <property type="project" value="UniProtKB-UniRule"/>
</dbReference>
<dbReference type="GO" id="GO:0070006">
    <property type="term" value="F:metalloaminopeptidase activity"/>
    <property type="evidence" value="ECO:0007669"/>
    <property type="project" value="InterPro"/>
</dbReference>
<dbReference type="GO" id="GO:0006508">
    <property type="term" value="P:proteolysis"/>
    <property type="evidence" value="ECO:0007669"/>
    <property type="project" value="UniProtKB-KW"/>
</dbReference>
<dbReference type="CDD" id="cd00433">
    <property type="entry name" value="Peptidase_M17"/>
    <property type="match status" value="1"/>
</dbReference>
<dbReference type="Gene3D" id="3.40.220.10">
    <property type="entry name" value="Leucine Aminopeptidase, subunit E, domain 1"/>
    <property type="match status" value="1"/>
</dbReference>
<dbReference type="Gene3D" id="3.40.630.10">
    <property type="entry name" value="Zn peptidases"/>
    <property type="match status" value="1"/>
</dbReference>
<dbReference type="HAMAP" id="MF_00181">
    <property type="entry name" value="Cytosol_peptidase_M17"/>
    <property type="match status" value="1"/>
</dbReference>
<dbReference type="InterPro" id="IPR011356">
    <property type="entry name" value="Leucine_aapep/pepB"/>
</dbReference>
<dbReference type="InterPro" id="IPR043472">
    <property type="entry name" value="Macro_dom-like"/>
</dbReference>
<dbReference type="InterPro" id="IPR000819">
    <property type="entry name" value="Peptidase_M17_C"/>
</dbReference>
<dbReference type="InterPro" id="IPR023042">
    <property type="entry name" value="Peptidase_M17_leu_NH2_pept"/>
</dbReference>
<dbReference type="InterPro" id="IPR008283">
    <property type="entry name" value="Peptidase_M17_N"/>
</dbReference>
<dbReference type="NCBIfam" id="NF002073">
    <property type="entry name" value="PRK00913.1-2"/>
    <property type="match status" value="1"/>
</dbReference>
<dbReference type="NCBIfam" id="NF002074">
    <property type="entry name" value="PRK00913.1-4"/>
    <property type="match status" value="1"/>
</dbReference>
<dbReference type="NCBIfam" id="NF002075">
    <property type="entry name" value="PRK00913.2-2"/>
    <property type="match status" value="1"/>
</dbReference>
<dbReference type="NCBIfam" id="NF002077">
    <property type="entry name" value="PRK00913.2-4"/>
    <property type="match status" value="1"/>
</dbReference>
<dbReference type="NCBIfam" id="NF002083">
    <property type="entry name" value="PRK00913.3-5"/>
    <property type="match status" value="1"/>
</dbReference>
<dbReference type="PANTHER" id="PTHR11963:SF23">
    <property type="entry name" value="CYTOSOL AMINOPEPTIDASE"/>
    <property type="match status" value="1"/>
</dbReference>
<dbReference type="PANTHER" id="PTHR11963">
    <property type="entry name" value="LEUCINE AMINOPEPTIDASE-RELATED"/>
    <property type="match status" value="1"/>
</dbReference>
<dbReference type="Pfam" id="PF00883">
    <property type="entry name" value="Peptidase_M17"/>
    <property type="match status" value="1"/>
</dbReference>
<dbReference type="Pfam" id="PF02789">
    <property type="entry name" value="Peptidase_M17_N"/>
    <property type="match status" value="1"/>
</dbReference>
<dbReference type="PRINTS" id="PR00481">
    <property type="entry name" value="LAMNOPPTDASE"/>
</dbReference>
<dbReference type="SUPFAM" id="SSF52949">
    <property type="entry name" value="Macro domain-like"/>
    <property type="match status" value="1"/>
</dbReference>
<dbReference type="SUPFAM" id="SSF53187">
    <property type="entry name" value="Zn-dependent exopeptidases"/>
    <property type="match status" value="1"/>
</dbReference>
<dbReference type="PROSITE" id="PS00631">
    <property type="entry name" value="CYTOSOL_AP"/>
    <property type="match status" value="1"/>
</dbReference>
<sequence>MPDVVNVGFVPMATSARGVLFVFCDDALKFGPDTVKALGTAANAVKRAAATSQFKGKSGSTLDILAPEGLKAVRLVVIGAGKLAAIKDHDFLKLGGVLAGKIGGGKEAVTVIAELPTGAMTPAQGAAVAAGVRMRAYKFDRYKTKKKDGEDTPLNASVAIAVRDVAAAKKAFAPQNHVVDGVIMARELVNEPPNVLFPVEFARRASQLRKLGVGVEVLDVPAMKRLKMGALLGVSQGSTQPGRTVIMRWNGGKKGEQPVAFVGKGVCFDTGGISIKPSGSMEDMKGDMGGAACVVGLMHALAARKAKINVVGAIGLVENMPDGNAQRPGDIVTSMSGQTIEIINTDAEGRLVLADVLWYVAKKHKPKFMVDLATLTGAILVALGTEYAGLFSNNDQLSERLTEAGQATGERVWRLPMGPEYDKMMDSQFADMKNAGARHGGSITAAQFLQRFVDDTPWAHLDIAGTAMGAPKTDINQSWGSGYGVRLLDRLVADYYESK</sequence>
<protein>
    <recommendedName>
        <fullName evidence="1">Probable cytosol aminopeptidase</fullName>
        <ecNumber evidence="1">3.4.11.1</ecNumber>
    </recommendedName>
    <alternativeName>
        <fullName evidence="1">Leucine aminopeptidase</fullName>
        <shortName evidence="1">LAP</shortName>
        <ecNumber evidence="1">3.4.11.10</ecNumber>
    </alternativeName>
    <alternativeName>
        <fullName evidence="1">Leucyl aminopeptidase</fullName>
    </alternativeName>
</protein>
<gene>
    <name evidence="1" type="primary">pepA</name>
    <name type="ordered locus">RPC_2314</name>
</gene>